<accession>A6ZN18</accession>
<feature type="transit peptide" description="Mitochondrion" evidence="2">
    <location>
        <begin position="1"/>
        <end position="44"/>
    </location>
</feature>
<feature type="chain" id="PRO_0000343133" description="Mitochondrial escape protein 2">
    <location>
        <begin position="45"/>
        <end position="850"/>
    </location>
</feature>
<feature type="topological domain" description="Mitochondrial matrix" evidence="2">
    <location>
        <begin position="45"/>
        <end position="287"/>
    </location>
</feature>
<feature type="transmembrane region" description="Helical" evidence="2">
    <location>
        <begin position="288"/>
        <end position="308"/>
    </location>
</feature>
<feature type="topological domain" description="Mitochondrial intermembrane" evidence="2">
    <location>
        <begin position="309"/>
        <end position="850"/>
    </location>
</feature>
<feature type="domain" description="RRM">
    <location>
        <begin position="198"/>
        <end position="272"/>
    </location>
</feature>
<feature type="region of interest" description="Disordered" evidence="3">
    <location>
        <begin position="44"/>
        <end position="66"/>
    </location>
</feature>
<feature type="region of interest" description="Disordered" evidence="3">
    <location>
        <begin position="607"/>
        <end position="633"/>
    </location>
</feature>
<feature type="compositionally biased region" description="Polar residues" evidence="3">
    <location>
        <begin position="47"/>
        <end position="64"/>
    </location>
</feature>
<feature type="compositionally biased region" description="Basic and acidic residues" evidence="3">
    <location>
        <begin position="607"/>
        <end position="621"/>
    </location>
</feature>
<reference key="1">
    <citation type="journal article" date="2007" name="Proc. Natl. Acad. Sci. U.S.A.">
        <title>Genome sequencing and comparative analysis of Saccharomyces cerevisiae strain YJM789.</title>
        <authorList>
            <person name="Wei W."/>
            <person name="McCusker J.H."/>
            <person name="Hyman R.W."/>
            <person name="Jones T."/>
            <person name="Ning Y."/>
            <person name="Cao Z."/>
            <person name="Gu Z."/>
            <person name="Bruno D."/>
            <person name="Miranda M."/>
            <person name="Nguyen M."/>
            <person name="Wilhelmy J."/>
            <person name="Komp C."/>
            <person name="Tamse R."/>
            <person name="Wang X."/>
            <person name="Jia P."/>
            <person name="Luedi P."/>
            <person name="Oefner P.J."/>
            <person name="David L."/>
            <person name="Dietrich F.S."/>
            <person name="Li Y."/>
            <person name="Davis R.W."/>
            <person name="Steinmetz L.M."/>
        </authorList>
    </citation>
    <scope>NUCLEOTIDE SEQUENCE [LARGE SCALE GENOMIC DNA]</scope>
    <source>
        <strain>YJM789</strain>
    </source>
</reference>
<name>YME2_YEAS7</name>
<sequence length="850" mass="96659">MLLVRTTSLNVSRMPVPCLARGIGILKGKYRLANLMNAQPSVRHVSSEIQQKDQQAGESNTATDTGVIHKSDEETLIYFDNVYARATSVWNPTLWYNLLLRNQSRDAVREKIRNLASPPNNPIYGLELKSTIPVKRDGGVFATFVVPPKYTKAQVNSLIQQNTARESSKNLLSYFTRVSAFPVKGSPWIEDLRRLPSTTIVIKFQGPALTEEEIYSLFRRYGTIIDIFPPTAANNNVAKVRYRSFRGAISAKNCVSGIEIHNTVLHIQYENIIRGHLVSNFFTNHTRIAIPVLFALLSIFAVLVFDPIREFSIEQKITHKYSLSWDNKFWKQLKTLTSSTMTSIKYYWGGPDDNHQRKHLWEERIEKVNDLKMWLEENNNTFVVIRGPRGSGKHDLVMQHTLQNRANVLYLDCDKLIKSRTDPKFLKNAASQLGYFPIFPWIDSVTGVLDLTVQGLTGQKTGLSETKESQFRNMLTTSLMSIRRIALKNYKAFVSTGDGTVNVKEEDYLQQHPEAKPVIVIDRFEGKSEINGFVYKELSDWAAMLVQMNIAHVIFLTETVASNQRLSESLPNQVFKNLILSDASKENSRNYVLSQLEDYLYYNKKSKGENVKEPESEKEIAENNDSDSEADTSVKEAEVILNEKELQEIDASLEPLGGRMLDLQAFVRRVKSGEEPSEALDKMIEQASEQITQMFLSDKIDSNKSAQAWELIELLSANPVIPFREIVNKPLFKAAPETGIMELENNGLITVSRDRGVLQEIRPAKPLYRAAFTYLINDPELAKVLKTRYLLKVVGFETGRIKKWEEELKPLGKVPDQKLFKTRLDYLSGKINASNAVITKCEEEIKNLSK</sequence>
<gene>
    <name type="primary">YME2</name>
    <name type="synonym">PRP12</name>
    <name type="synonym">RNA12</name>
    <name type="ORF">SCY_4484</name>
</gene>
<evidence type="ECO:0000250" key="1"/>
<evidence type="ECO:0000255" key="2"/>
<evidence type="ECO:0000256" key="3">
    <source>
        <dbReference type="SAM" id="MobiDB-lite"/>
    </source>
</evidence>
<evidence type="ECO:0000305" key="4"/>
<keyword id="KW-0472">Membrane</keyword>
<keyword id="KW-0496">Mitochondrion</keyword>
<keyword id="KW-0999">Mitochondrion inner membrane</keyword>
<keyword id="KW-0507">mRNA processing</keyword>
<keyword id="KW-0694">RNA-binding</keyword>
<keyword id="KW-0809">Transit peptide</keyword>
<keyword id="KW-0812">Transmembrane</keyword>
<keyword id="KW-1133">Transmembrane helix</keyword>
<protein>
    <recommendedName>
        <fullName>Mitochondrial escape protein 2</fullName>
    </recommendedName>
    <alternativeName>
        <fullName>Protein RNA12</fullName>
    </alternativeName>
</protein>
<dbReference type="EMBL" id="AAFW02000021">
    <property type="protein sequence ID" value="EDN64242.1"/>
    <property type="molecule type" value="Genomic_DNA"/>
</dbReference>
<dbReference type="HOGENOM" id="CLU_007861_1_0_1"/>
<dbReference type="Proteomes" id="UP000007060">
    <property type="component" value="Unassembled WGS sequence"/>
</dbReference>
<dbReference type="GO" id="GO:0005743">
    <property type="term" value="C:mitochondrial inner membrane"/>
    <property type="evidence" value="ECO:0007669"/>
    <property type="project" value="UniProtKB-SubCell"/>
</dbReference>
<dbReference type="GO" id="GO:0003723">
    <property type="term" value="F:RNA binding"/>
    <property type="evidence" value="ECO:0007669"/>
    <property type="project" value="UniProtKB-KW"/>
</dbReference>
<dbReference type="GO" id="GO:0000002">
    <property type="term" value="P:mitochondrial genome maintenance"/>
    <property type="evidence" value="ECO:0007669"/>
    <property type="project" value="InterPro"/>
</dbReference>
<dbReference type="GO" id="GO:0006397">
    <property type="term" value="P:mRNA processing"/>
    <property type="evidence" value="ECO:0007669"/>
    <property type="project" value="UniProtKB-KW"/>
</dbReference>
<dbReference type="CDD" id="cd12433">
    <property type="entry name" value="RRM_Yme2p_like"/>
    <property type="match status" value="1"/>
</dbReference>
<dbReference type="FunFam" id="3.30.70.330:FF:000786">
    <property type="entry name" value="Yme2p"/>
    <property type="match status" value="1"/>
</dbReference>
<dbReference type="Gene3D" id="3.30.70.330">
    <property type="match status" value="1"/>
</dbReference>
<dbReference type="Gene3D" id="3.40.50.300">
    <property type="entry name" value="P-loop containing nucleotide triphosphate hydrolases"/>
    <property type="match status" value="1"/>
</dbReference>
<dbReference type="InterPro" id="IPR018850">
    <property type="entry name" value="Mt_escape_2_C"/>
</dbReference>
<dbReference type="InterPro" id="IPR012677">
    <property type="entry name" value="Nucleotide-bd_a/b_plait_sf"/>
</dbReference>
<dbReference type="InterPro" id="IPR027417">
    <property type="entry name" value="P-loop_NTPase"/>
</dbReference>
<dbReference type="InterPro" id="IPR035979">
    <property type="entry name" value="RBD_domain_sf"/>
</dbReference>
<dbReference type="InterPro" id="IPR000504">
    <property type="entry name" value="RRM_dom"/>
</dbReference>
<dbReference type="InterPro" id="IPR039627">
    <property type="entry name" value="Yme2_C"/>
</dbReference>
<dbReference type="InterPro" id="IPR034260">
    <property type="entry name" value="Yme2_RRM"/>
</dbReference>
<dbReference type="PANTHER" id="PTHR32198">
    <property type="entry name" value="MITOCHONDRIAL ESCAPE PROTEIN 2"/>
    <property type="match status" value="1"/>
</dbReference>
<dbReference type="PANTHER" id="PTHR32198:SF2">
    <property type="entry name" value="MITOCHONDRIAL ESCAPE PROTEIN 2"/>
    <property type="match status" value="1"/>
</dbReference>
<dbReference type="Pfam" id="PF10443">
    <property type="entry name" value="RNA12"/>
    <property type="match status" value="1"/>
</dbReference>
<dbReference type="Pfam" id="PF00076">
    <property type="entry name" value="RRM_1"/>
    <property type="match status" value="1"/>
</dbReference>
<dbReference type="SMART" id="SM00360">
    <property type="entry name" value="RRM"/>
    <property type="match status" value="1"/>
</dbReference>
<dbReference type="SUPFAM" id="SSF54928">
    <property type="entry name" value="RNA-binding domain, RBD"/>
    <property type="match status" value="1"/>
</dbReference>
<organism>
    <name type="scientific">Saccharomyces cerevisiae (strain YJM789)</name>
    <name type="common">Baker's yeast</name>
    <dbReference type="NCBI Taxonomy" id="307796"/>
    <lineage>
        <taxon>Eukaryota</taxon>
        <taxon>Fungi</taxon>
        <taxon>Dikarya</taxon>
        <taxon>Ascomycota</taxon>
        <taxon>Saccharomycotina</taxon>
        <taxon>Saccharomycetes</taxon>
        <taxon>Saccharomycetales</taxon>
        <taxon>Saccharomycetaceae</taxon>
        <taxon>Saccharomyces</taxon>
    </lineage>
</organism>
<comment type="function">
    <text evidence="1">Plays a role in maintaining the mitochondrial genome and in controlling the mtDNA escape. Involved in the regulation of mtDNA nucleotide structure and number. May have a dispensable role in early maturation of pre-rRNA (By similarity).</text>
</comment>
<comment type="subcellular location">
    <subcellularLocation>
        <location evidence="1">Mitochondrion inner membrane</location>
        <topology evidence="1">Single-pass membrane protein</topology>
    </subcellularLocation>
</comment>
<comment type="similarity">
    <text evidence="4">Belongs to the YME2 family.</text>
</comment>
<proteinExistence type="inferred from homology"/>